<sequence length="363" mass="40407">MTTVLFVGLGLIGGSLASNIKYHNPNTNIIAYDADISQLDKAKSIGIINEKCLNYSEAIKKADVIIYATPVAITNKYLSELIDMPTKPGVIVSDTGSTKAMIQQHECNLLKHNIHLVSGHPMAGSHKSGVLNAKKHLFENAYYILVYNEPRNEQAANTLKELLSPTLAKFIVTTAEEHDYVTSVVSHLPHIVASSLVHVSQKNGQEHHLVNKLAAGGFRDITRIASSNAQMWKDITLSNKTYILEMIRQLKSQFQDLERLIESNDSEKLLSFFAQAKSYRDALPAKQLGGLNTAYDLYVDIPDESGMISKVTYILSLHNISISNLRILEVREDIYGALKISFKNPTDRERGMQALSDFDCYIQ</sequence>
<evidence type="ECO:0000255" key="1"/>
<evidence type="ECO:0000255" key="2">
    <source>
        <dbReference type="PROSITE-ProRule" id="PRU00522"/>
    </source>
</evidence>
<evidence type="ECO:0000255" key="3">
    <source>
        <dbReference type="PROSITE-ProRule" id="PRU01007"/>
    </source>
</evidence>
<evidence type="ECO:0000305" key="4"/>
<organism>
    <name type="scientific">Staphylococcus aureus (strain NCTC 8325 / PS 47)</name>
    <dbReference type="NCBI Taxonomy" id="93061"/>
    <lineage>
        <taxon>Bacteria</taxon>
        <taxon>Bacillati</taxon>
        <taxon>Bacillota</taxon>
        <taxon>Bacilli</taxon>
        <taxon>Bacillales</taxon>
        <taxon>Staphylococcaceae</taxon>
        <taxon>Staphylococcus</taxon>
    </lineage>
</organism>
<protein>
    <recommendedName>
        <fullName>Prephenate dehydrogenase</fullName>
        <shortName>PDH</shortName>
        <ecNumber>1.3.1.12</ecNumber>
    </recommendedName>
</protein>
<proteinExistence type="inferred from homology"/>
<reference key="1">
    <citation type="book" date="2006" name="Gram positive pathogens, 2nd edition">
        <title>The Staphylococcus aureus NCTC 8325 genome.</title>
        <editorList>
            <person name="Fischetti V."/>
            <person name="Novick R."/>
            <person name="Ferretti J."/>
            <person name="Portnoy D."/>
            <person name="Rood J."/>
        </editorList>
        <authorList>
            <person name="Gillaspy A.F."/>
            <person name="Worrell V."/>
            <person name="Orvis J."/>
            <person name="Roe B.A."/>
            <person name="Dyer D.W."/>
            <person name="Iandolo J.J."/>
        </authorList>
    </citation>
    <scope>NUCLEOTIDE SEQUENCE [LARGE SCALE GENOMIC DNA]</scope>
    <source>
        <strain>NCTC 8325 / PS 47</strain>
    </source>
</reference>
<comment type="catalytic activity">
    <reaction>
        <text>prephenate + NAD(+) = 3-(4-hydroxyphenyl)pyruvate + CO2 + NADH</text>
        <dbReference type="Rhea" id="RHEA:13869"/>
        <dbReference type="ChEBI" id="CHEBI:16526"/>
        <dbReference type="ChEBI" id="CHEBI:29934"/>
        <dbReference type="ChEBI" id="CHEBI:36242"/>
        <dbReference type="ChEBI" id="CHEBI:57540"/>
        <dbReference type="ChEBI" id="CHEBI:57945"/>
        <dbReference type="EC" id="1.3.1.12"/>
    </reaction>
</comment>
<comment type="pathway">
    <text>Amino-acid biosynthesis; L-tyrosine biosynthesis; (4-hydroxyphenyl)pyruvate from prephenate (NAD(+) route): step 1/1.</text>
</comment>
<comment type="similarity">
    <text evidence="4">Belongs to the prephenate/arogenate dehydrogenase family.</text>
</comment>
<feature type="chain" id="PRO_0000282661" description="Prephenate dehydrogenase">
    <location>
        <begin position="1"/>
        <end position="363"/>
    </location>
</feature>
<feature type="domain" description="Prephenate/arogenate dehydrogenase" evidence="2">
    <location>
        <begin position="2"/>
        <end position="291"/>
    </location>
</feature>
<feature type="domain" description="ACT" evidence="3">
    <location>
        <begin position="296"/>
        <end position="363"/>
    </location>
</feature>
<feature type="binding site" evidence="1">
    <location>
        <begin position="3"/>
        <end position="33"/>
    </location>
    <ligand>
        <name>NAD(+)</name>
        <dbReference type="ChEBI" id="CHEBI:57540"/>
    </ligand>
</feature>
<name>TYRA_STAA8</name>
<accession>Q2FYS1</accession>
<gene>
    <name type="primary">tyrA</name>
    <name type="ordered locus">SAOUHSC_01364</name>
</gene>
<dbReference type="EC" id="1.3.1.12"/>
<dbReference type="EMBL" id="CP000253">
    <property type="protein sequence ID" value="ABD30459.1"/>
    <property type="molecule type" value="Genomic_DNA"/>
</dbReference>
<dbReference type="RefSeq" id="WP_000214264.1">
    <property type="nucleotide sequence ID" value="NZ_LS483365.1"/>
</dbReference>
<dbReference type="RefSeq" id="YP_499891.1">
    <property type="nucleotide sequence ID" value="NC_007795.1"/>
</dbReference>
<dbReference type="SMR" id="Q2FYS1"/>
<dbReference type="STRING" id="93061.SAOUHSC_01364"/>
<dbReference type="PaxDb" id="1280-SAXN108_1381"/>
<dbReference type="GeneID" id="3920069"/>
<dbReference type="KEGG" id="sao:SAOUHSC_01364"/>
<dbReference type="PATRIC" id="fig|93061.5.peg.1248"/>
<dbReference type="eggNOG" id="COG0287">
    <property type="taxonomic scope" value="Bacteria"/>
</dbReference>
<dbReference type="HOGENOM" id="CLU_055968_2_1_9"/>
<dbReference type="OrthoDB" id="9802008at2"/>
<dbReference type="UniPathway" id="UPA00122">
    <property type="reaction ID" value="UER00961"/>
</dbReference>
<dbReference type="Proteomes" id="UP000008816">
    <property type="component" value="Chromosome"/>
</dbReference>
<dbReference type="GO" id="GO:0070403">
    <property type="term" value="F:NAD+ binding"/>
    <property type="evidence" value="ECO:0000318"/>
    <property type="project" value="GO_Central"/>
</dbReference>
<dbReference type="GO" id="GO:0008977">
    <property type="term" value="F:prephenate dehydrogenase (NAD+) activity"/>
    <property type="evidence" value="ECO:0000318"/>
    <property type="project" value="GO_Central"/>
</dbReference>
<dbReference type="GO" id="GO:0004665">
    <property type="term" value="F:prephenate dehydrogenase (NADP+) activity"/>
    <property type="evidence" value="ECO:0007669"/>
    <property type="project" value="InterPro"/>
</dbReference>
<dbReference type="GO" id="GO:0006571">
    <property type="term" value="P:tyrosine biosynthetic process"/>
    <property type="evidence" value="ECO:0000318"/>
    <property type="project" value="GO_Central"/>
</dbReference>
<dbReference type="CDD" id="cd04909">
    <property type="entry name" value="ACT_PDH-BS"/>
    <property type="match status" value="1"/>
</dbReference>
<dbReference type="FunFam" id="1.10.3660.10:FF:000003">
    <property type="entry name" value="Prephenate dehydrogenase"/>
    <property type="match status" value="1"/>
</dbReference>
<dbReference type="FunFam" id="3.40.50.720:FF:000208">
    <property type="entry name" value="Prephenate dehydrogenase"/>
    <property type="match status" value="1"/>
</dbReference>
<dbReference type="Gene3D" id="1.10.3660.10">
    <property type="entry name" value="6-phosphogluconate dehydrogenase C-terminal like domain"/>
    <property type="match status" value="1"/>
</dbReference>
<dbReference type="Gene3D" id="3.40.50.720">
    <property type="entry name" value="NAD(P)-binding Rossmann-like Domain"/>
    <property type="match status" value="1"/>
</dbReference>
<dbReference type="InterPro" id="IPR008927">
    <property type="entry name" value="6-PGluconate_DH-like_C_sf"/>
</dbReference>
<dbReference type="InterPro" id="IPR045865">
    <property type="entry name" value="ACT-like_dom_sf"/>
</dbReference>
<dbReference type="InterPro" id="IPR002912">
    <property type="entry name" value="ACT_dom"/>
</dbReference>
<dbReference type="InterPro" id="IPR036291">
    <property type="entry name" value="NAD(P)-bd_dom_sf"/>
</dbReference>
<dbReference type="InterPro" id="IPR046825">
    <property type="entry name" value="PDH_C"/>
</dbReference>
<dbReference type="InterPro" id="IPR046826">
    <property type="entry name" value="PDH_N"/>
</dbReference>
<dbReference type="InterPro" id="IPR050812">
    <property type="entry name" value="Preph/Arog_dehydrog"/>
</dbReference>
<dbReference type="InterPro" id="IPR003099">
    <property type="entry name" value="Prephen_DH"/>
</dbReference>
<dbReference type="NCBIfam" id="NF005106">
    <property type="entry name" value="PRK06545.1-4"/>
    <property type="match status" value="1"/>
</dbReference>
<dbReference type="NCBIfam" id="NF005107">
    <property type="entry name" value="PRK06545.1-5"/>
    <property type="match status" value="1"/>
</dbReference>
<dbReference type="PANTHER" id="PTHR21363">
    <property type="entry name" value="PREPHENATE DEHYDROGENASE"/>
    <property type="match status" value="1"/>
</dbReference>
<dbReference type="PANTHER" id="PTHR21363:SF0">
    <property type="entry name" value="PREPHENATE DEHYDROGENASE [NADP(+)]"/>
    <property type="match status" value="1"/>
</dbReference>
<dbReference type="Pfam" id="PF20463">
    <property type="entry name" value="PDH_C"/>
    <property type="match status" value="1"/>
</dbReference>
<dbReference type="Pfam" id="PF02153">
    <property type="entry name" value="PDH_N"/>
    <property type="match status" value="1"/>
</dbReference>
<dbReference type="SUPFAM" id="SSF48179">
    <property type="entry name" value="6-phosphogluconate dehydrogenase C-terminal domain-like"/>
    <property type="match status" value="1"/>
</dbReference>
<dbReference type="SUPFAM" id="SSF55021">
    <property type="entry name" value="ACT-like"/>
    <property type="match status" value="1"/>
</dbReference>
<dbReference type="SUPFAM" id="SSF51735">
    <property type="entry name" value="NAD(P)-binding Rossmann-fold domains"/>
    <property type="match status" value="1"/>
</dbReference>
<dbReference type="PROSITE" id="PS51671">
    <property type="entry name" value="ACT"/>
    <property type="match status" value="1"/>
</dbReference>
<dbReference type="PROSITE" id="PS51176">
    <property type="entry name" value="PDH_ADH"/>
    <property type="match status" value="1"/>
</dbReference>
<keyword id="KW-0028">Amino-acid biosynthesis</keyword>
<keyword id="KW-0057">Aromatic amino acid biosynthesis</keyword>
<keyword id="KW-0520">NAD</keyword>
<keyword id="KW-0560">Oxidoreductase</keyword>
<keyword id="KW-1185">Reference proteome</keyword>
<keyword id="KW-0827">Tyrosine biosynthesis</keyword>